<proteinExistence type="evidence at protein level"/>
<evidence type="ECO:0000250" key="1">
    <source>
        <dbReference type="UniProtKB" id="P77211"/>
    </source>
</evidence>
<evidence type="ECO:0000255" key="2"/>
<evidence type="ECO:0000269" key="3">
    <source>
    </source>
</evidence>
<evidence type="ECO:0000269" key="4">
    <source>
    </source>
</evidence>
<evidence type="ECO:0000303" key="5">
    <source>
    </source>
</evidence>
<evidence type="ECO:0000305" key="6"/>
<dbReference type="EMBL" id="DQ378166">
    <property type="protein sequence ID" value="ABD38133.1"/>
    <property type="molecule type" value="Genomic_DNA"/>
</dbReference>
<dbReference type="RefSeq" id="WP_005545419.1">
    <property type="nucleotide sequence ID" value="NZ_VSEW01000002.1"/>
</dbReference>
<dbReference type="SMR" id="Q2EHL7"/>
<dbReference type="STRING" id="714.ACT75_10870"/>
<dbReference type="TCDB" id="1.B.17.3.11">
    <property type="family name" value="the outer membrane factor (omf) family"/>
</dbReference>
<dbReference type="eggNOG" id="COG1538">
    <property type="taxonomic scope" value="Bacteria"/>
</dbReference>
<dbReference type="GO" id="GO:0009279">
    <property type="term" value="C:cell outer membrane"/>
    <property type="evidence" value="ECO:0007669"/>
    <property type="project" value="UniProtKB-SubCell"/>
</dbReference>
<dbReference type="GO" id="GO:0046930">
    <property type="term" value="C:pore complex"/>
    <property type="evidence" value="ECO:0007669"/>
    <property type="project" value="UniProtKB-KW"/>
</dbReference>
<dbReference type="GO" id="GO:0015562">
    <property type="term" value="F:efflux transmembrane transporter activity"/>
    <property type="evidence" value="ECO:0007669"/>
    <property type="project" value="InterPro"/>
</dbReference>
<dbReference type="GO" id="GO:0015288">
    <property type="term" value="F:porin activity"/>
    <property type="evidence" value="ECO:0007669"/>
    <property type="project" value="UniProtKB-KW"/>
</dbReference>
<dbReference type="GO" id="GO:0006811">
    <property type="term" value="P:monoatomic ion transport"/>
    <property type="evidence" value="ECO:0007669"/>
    <property type="project" value="UniProtKB-KW"/>
</dbReference>
<dbReference type="GO" id="GO:0046677">
    <property type="term" value="P:response to antibiotic"/>
    <property type="evidence" value="ECO:0007669"/>
    <property type="project" value="UniProtKB-KW"/>
</dbReference>
<dbReference type="Gene3D" id="1.20.1600.10">
    <property type="entry name" value="Outer membrane efflux proteins (OEP)"/>
    <property type="match status" value="1"/>
</dbReference>
<dbReference type="Gene3D" id="2.20.200.10">
    <property type="entry name" value="Outer membrane efflux proteins (OEP)"/>
    <property type="match status" value="1"/>
</dbReference>
<dbReference type="InterPro" id="IPR050737">
    <property type="entry name" value="OMF"/>
</dbReference>
<dbReference type="InterPro" id="IPR003423">
    <property type="entry name" value="OMP_efflux"/>
</dbReference>
<dbReference type="InterPro" id="IPR010131">
    <property type="entry name" value="RND_efflux_OM_lipoprot_NodT"/>
</dbReference>
<dbReference type="NCBIfam" id="TIGR01845">
    <property type="entry name" value="outer_NodT"/>
    <property type="match status" value="1"/>
</dbReference>
<dbReference type="NCBIfam" id="NF047721">
    <property type="entry name" value="ToxDrgExpTdeA"/>
    <property type="match status" value="1"/>
</dbReference>
<dbReference type="PANTHER" id="PTHR30203:SF32">
    <property type="entry name" value="CATION EFFLUX SYSTEM PROTEIN CUSC"/>
    <property type="match status" value="1"/>
</dbReference>
<dbReference type="PANTHER" id="PTHR30203">
    <property type="entry name" value="OUTER MEMBRANE CATION EFFLUX PROTEIN"/>
    <property type="match status" value="1"/>
</dbReference>
<dbReference type="Pfam" id="PF02321">
    <property type="entry name" value="OEP"/>
    <property type="match status" value="2"/>
</dbReference>
<dbReference type="SUPFAM" id="SSF56954">
    <property type="entry name" value="Outer membrane efflux proteins (OEP)"/>
    <property type="match status" value="1"/>
</dbReference>
<dbReference type="PROSITE" id="PS51257">
    <property type="entry name" value="PROKAR_LIPOPROTEIN"/>
    <property type="match status" value="1"/>
</dbReference>
<accession>Q2EHL7</accession>
<organism>
    <name type="scientific">Aggregatibacter actinomycetemcomitans</name>
    <name type="common">Actinobacillus actinomycetemcomitans</name>
    <name type="synonym">Haemophilus actinomycetemcomitans</name>
    <dbReference type="NCBI Taxonomy" id="714"/>
    <lineage>
        <taxon>Bacteria</taxon>
        <taxon>Pseudomonadati</taxon>
        <taxon>Pseudomonadota</taxon>
        <taxon>Gammaproteobacteria</taxon>
        <taxon>Pasteurellales</taxon>
        <taxon>Pasteurellaceae</taxon>
        <taxon>Aggregatibacter</taxon>
    </lineage>
</organism>
<keyword id="KW-0046">Antibiotic resistance</keyword>
<keyword id="KW-0998">Cell outer membrane</keyword>
<keyword id="KW-0406">Ion transport</keyword>
<keyword id="KW-0472">Membrane</keyword>
<keyword id="KW-0626">Porin</keyword>
<keyword id="KW-0732">Signal</keyword>
<keyword id="KW-0812">Transmembrane</keyword>
<keyword id="KW-1134">Transmembrane beta strand</keyword>
<keyword id="KW-0813">Transport</keyword>
<reference key="1">
    <citation type="journal article" date="2007" name="Gene">
        <title>TdeA, a TolC-like protein required for toxin and drug export in Aggregatibacter (Actinobacillus) actinomycetemcomitans.</title>
        <authorList>
            <person name="Crosby J.A."/>
            <person name="Kachlany S.C."/>
        </authorList>
    </citation>
    <scope>NUCLEOTIDE SEQUENCE [GENOMIC DNA]</scope>
    <scope>FUNCTION</scope>
    <scope>SUBUNIT</scope>
    <scope>DISRUPTION PHENOTYPE</scope>
    <source>
        <strain>IDH781</strain>
    </source>
</reference>
<reference key="2">
    <citation type="journal article" date="2008" name="J. Microbiol. Biotechnol.">
        <title>Expression and biochemical characterization of the periplasmic domain of bacterial outer membrane porin TdeA.</title>
        <authorList>
            <person name="Kim S."/>
            <person name="Yum S."/>
            <person name="Jo W.S."/>
            <person name="Lee B.L."/>
            <person name="Jeong M.H."/>
            <person name="Ha N.C."/>
        </authorList>
    </citation>
    <scope>SUBUNIT</scope>
    <scope>CHARACTERIZATION OF THE PERIPLASMIC DOMAIN</scope>
</reference>
<sequence>MFTIKKLTLTIVVATTLTGCANIGDSYRASLKNYKQYEEITKQYNIKNDWWKLYKDAQLNRVVEKALLNNKDLAKATISVNRALYSANLAGANLVPAFSGSTRSTAQKNIKTGGNSTISHTGSLNVSYTLDLWFRLADTADAAEWAHKATVQDMESTKLSLINSVVTTYYQIAYLNDAISTTKESIKYYTDISNIMRNRLAQGVADSISVDQAQQAVLTARNNLITYQLNRKTAEQTLRNLLNLKPDETLKITFPHILKVKSVGVNLNVPVSVIANRPDIKGYQARLSSAFKNVKATEKSWFPEITLGGSLNSSGKKLNSATNTLIGGGALGISLPFLNWNTVKWNVKISEADYETARLNYEKSITVALNDVDTNYFSFTQAKKRFTNAQKTYIYNQRITQYYRNRYNAGVSELREWLTAANTEKNSQLSILQAKYNVIQAENAVYSSMAGYYSVKK</sequence>
<comment type="function">
    <text evidence="3">Required for secretion of the LtxA leukotoxin and resistance to various antimicrobial compounds.</text>
</comment>
<comment type="subunit">
    <text evidence="4 5">Homotrimer (PubMed:18633280). Probably part of a complex composed of LtxB, LtxD and TdeA, which forms a single transport channel across the two membranes (PubMed:17116373).</text>
</comment>
<comment type="subcellular location">
    <subcellularLocation>
        <location evidence="1">Cell outer membrane</location>
        <topology evidence="1">Multi-pass membrane protein</topology>
    </subcellularLocation>
</comment>
<comment type="domain">
    <text evidence="4">The periplasmic domain interacts in vitro with purified peptidoglycans.</text>
</comment>
<comment type="disruption phenotype">
    <text evidence="3">Mutant cannot secrete leukotoxin and is more sensitive to clotrimazole, erythromycin, ethidium bromide, cationic detergents, bile-acids, anionic detergents and chloramphenicol.</text>
</comment>
<comment type="similarity">
    <text evidence="6">Belongs to the outer membrane factor (OMF) (TC 1.B.17) family.</text>
</comment>
<gene>
    <name evidence="5" type="primary">tdeA</name>
</gene>
<protein>
    <recommendedName>
        <fullName evidence="5">Toxin and drug export protein A</fullName>
    </recommendedName>
</protein>
<name>TDEA_AGGAC</name>
<feature type="signal peptide" evidence="2">
    <location>
        <begin position="1"/>
        <end position="23"/>
    </location>
</feature>
<feature type="chain" id="PRO_0000431390" description="Toxin and drug export protein A">
    <location>
        <begin position="24"/>
        <end position="457"/>
    </location>
</feature>